<name>SNX30_XENTR</name>
<comment type="function">
    <text evidence="3">Involved in the regulation of endocytosis and in several stages of intracellular trafficking. Together with snx4, involved in autophagosome assembly.</text>
</comment>
<comment type="subcellular location">
    <subcellularLocation>
        <location evidence="3">Early endosome membrane</location>
        <topology evidence="1">Peripheral membrane protein</topology>
        <orientation evidence="1">Cytoplasmic side</orientation>
    </subcellularLocation>
</comment>
<comment type="similarity">
    <text evidence="9">Belongs to the sorting nexin family.</text>
</comment>
<gene>
    <name type="primary">snx30</name>
    <name type="ORF">TEgg065l16.1</name>
</gene>
<keyword id="KW-0967">Endosome</keyword>
<keyword id="KW-0472">Membrane</keyword>
<keyword id="KW-0653">Protein transport</keyword>
<keyword id="KW-1185">Reference proteome</keyword>
<keyword id="KW-0813">Transport</keyword>
<proteinExistence type="evidence at transcript level"/>
<accession>Q28E02</accession>
<reference key="1">
    <citation type="submission" date="2006-10" db="EMBL/GenBank/DDBJ databases">
        <authorList>
            <consortium name="Sanger Xenopus tropicalis EST/cDNA project"/>
        </authorList>
    </citation>
    <scope>NUCLEOTIDE SEQUENCE [LARGE SCALE MRNA]</scope>
    <source>
        <tissue>Egg</tissue>
    </source>
</reference>
<organism>
    <name type="scientific">Xenopus tropicalis</name>
    <name type="common">Western clawed frog</name>
    <name type="synonym">Silurana tropicalis</name>
    <dbReference type="NCBI Taxonomy" id="8364"/>
    <lineage>
        <taxon>Eukaryota</taxon>
        <taxon>Metazoa</taxon>
        <taxon>Chordata</taxon>
        <taxon>Craniata</taxon>
        <taxon>Vertebrata</taxon>
        <taxon>Euteleostomi</taxon>
        <taxon>Amphibia</taxon>
        <taxon>Batrachia</taxon>
        <taxon>Anura</taxon>
        <taxon>Pipoidea</taxon>
        <taxon>Pipidae</taxon>
        <taxon>Xenopodinae</taxon>
        <taxon>Xenopus</taxon>
        <taxon>Silurana</taxon>
    </lineage>
</organism>
<protein>
    <recommendedName>
        <fullName>Sorting nexin-30</fullName>
    </recommendedName>
</protein>
<feature type="chain" id="PRO_0000284537" description="Sorting nexin-30">
    <location>
        <begin position="1"/>
        <end position="446"/>
    </location>
</feature>
<feature type="domain" description="PX" evidence="6">
    <location>
        <begin position="98"/>
        <end position="219"/>
    </location>
</feature>
<feature type="domain" description="BAR" evidence="7">
    <location>
        <begin position="243"/>
        <end position="446"/>
    </location>
</feature>
<feature type="region of interest" description="Disordered" evidence="8">
    <location>
        <begin position="1"/>
        <end position="84"/>
    </location>
</feature>
<feature type="compositionally biased region" description="Polar residues" evidence="8">
    <location>
        <begin position="1"/>
        <end position="18"/>
    </location>
</feature>
<feature type="compositionally biased region" description="Low complexity" evidence="8">
    <location>
        <begin position="70"/>
        <end position="84"/>
    </location>
</feature>
<feature type="binding site" evidence="2">
    <location>
        <position position="141"/>
    </location>
    <ligand>
        <name>a 1,2-diacyl-sn-glycero-3-phospho-(1D-myo-inositol-3-phosphate)</name>
        <dbReference type="ChEBI" id="CHEBI:58088"/>
    </ligand>
</feature>
<feature type="binding site" evidence="2">
    <location>
        <position position="143"/>
    </location>
    <ligand>
        <name>a 1,2-diacyl-sn-glycero-3-phospho-(1D-myo-inositol-3-phosphate)</name>
        <dbReference type="ChEBI" id="CHEBI:58088"/>
    </ligand>
</feature>
<feature type="binding site" evidence="5">
    <location>
        <position position="171"/>
    </location>
    <ligand>
        <name>a 1,2-diacyl-sn-glycero-3-phospho-(1D-myo-inositol-3-phosphate)</name>
        <dbReference type="ChEBI" id="CHEBI:58088"/>
    </ligand>
</feature>
<feature type="binding site" evidence="4">
    <location>
        <position position="185"/>
    </location>
    <ligand>
        <name>a 1,2-diacyl-sn-glycero-3-phospho-(1D-myo-inositol-3-phosphate)</name>
        <dbReference type="ChEBI" id="CHEBI:58088"/>
    </ligand>
</feature>
<dbReference type="EMBL" id="CR848512">
    <property type="protein sequence ID" value="CAJ81312.1"/>
    <property type="molecule type" value="mRNA"/>
</dbReference>
<dbReference type="RefSeq" id="NP_001016905.1">
    <property type="nucleotide sequence ID" value="NM_001016905.2"/>
</dbReference>
<dbReference type="SMR" id="Q28E02"/>
<dbReference type="FunCoup" id="Q28E02">
    <property type="interactions" value="578"/>
</dbReference>
<dbReference type="STRING" id="8364.ENSXETP00000019184"/>
<dbReference type="PaxDb" id="8364-ENSXETP00000004753"/>
<dbReference type="GeneID" id="549659"/>
<dbReference type="KEGG" id="xtr:549659"/>
<dbReference type="AGR" id="Xenbase:XB-GENE-944717"/>
<dbReference type="CTD" id="401548"/>
<dbReference type="Xenbase" id="XB-GENE-944717">
    <property type="gene designation" value="snx30"/>
</dbReference>
<dbReference type="eggNOG" id="KOG2273">
    <property type="taxonomic scope" value="Eukaryota"/>
</dbReference>
<dbReference type="HOGENOM" id="CLU_040655_1_0_1"/>
<dbReference type="InParanoid" id="Q28E02"/>
<dbReference type="OMA" id="WSLHRFI"/>
<dbReference type="OrthoDB" id="205639at2759"/>
<dbReference type="PhylomeDB" id="Q28E02"/>
<dbReference type="TreeFam" id="TF328543"/>
<dbReference type="Proteomes" id="UP000008143">
    <property type="component" value="Chromosome 1"/>
</dbReference>
<dbReference type="Bgee" id="ENSXETG00000002230">
    <property type="expression patterns" value="Expressed in egg cell and 14 other cell types or tissues"/>
</dbReference>
<dbReference type="GO" id="GO:0005769">
    <property type="term" value="C:early endosome"/>
    <property type="evidence" value="ECO:0000250"/>
    <property type="project" value="UniProtKB"/>
</dbReference>
<dbReference type="GO" id="GO:0031901">
    <property type="term" value="C:early endosome membrane"/>
    <property type="evidence" value="ECO:0007669"/>
    <property type="project" value="UniProtKB-SubCell"/>
</dbReference>
<dbReference type="GO" id="GO:0035091">
    <property type="term" value="F:phosphatidylinositol binding"/>
    <property type="evidence" value="ECO:0007669"/>
    <property type="project" value="InterPro"/>
</dbReference>
<dbReference type="GO" id="GO:2000786">
    <property type="term" value="P:positive regulation of autophagosome assembly"/>
    <property type="evidence" value="ECO:0000250"/>
    <property type="project" value="UniProtKB"/>
</dbReference>
<dbReference type="GO" id="GO:0015031">
    <property type="term" value="P:protein transport"/>
    <property type="evidence" value="ECO:0000250"/>
    <property type="project" value="UniProtKB"/>
</dbReference>
<dbReference type="CDD" id="cd06860">
    <property type="entry name" value="PX_SNX7_30_like"/>
    <property type="match status" value="1"/>
</dbReference>
<dbReference type="Gene3D" id="1.20.1270.60">
    <property type="entry name" value="Arfaptin homology (AH) domain/BAR domain"/>
    <property type="match status" value="1"/>
</dbReference>
<dbReference type="Gene3D" id="3.30.1520.10">
    <property type="entry name" value="Phox-like domain"/>
    <property type="match status" value="1"/>
</dbReference>
<dbReference type="InterPro" id="IPR027267">
    <property type="entry name" value="AH/BAR_dom_sf"/>
</dbReference>
<dbReference type="InterPro" id="IPR004148">
    <property type="entry name" value="BAR_dom"/>
</dbReference>
<dbReference type="InterPro" id="IPR001683">
    <property type="entry name" value="PX_dom"/>
</dbReference>
<dbReference type="InterPro" id="IPR036871">
    <property type="entry name" value="PX_dom_sf"/>
</dbReference>
<dbReference type="PANTHER" id="PTHR45949:SF1">
    <property type="entry name" value="SORTING NEXIN-30"/>
    <property type="match status" value="1"/>
</dbReference>
<dbReference type="PANTHER" id="PTHR45949">
    <property type="entry name" value="SORTING NEXIN-4"/>
    <property type="match status" value="1"/>
</dbReference>
<dbReference type="Pfam" id="PF03114">
    <property type="entry name" value="BAR"/>
    <property type="match status" value="1"/>
</dbReference>
<dbReference type="Pfam" id="PF00787">
    <property type="entry name" value="PX"/>
    <property type="match status" value="1"/>
</dbReference>
<dbReference type="SMART" id="SM00312">
    <property type="entry name" value="PX"/>
    <property type="match status" value="1"/>
</dbReference>
<dbReference type="SUPFAM" id="SSF103657">
    <property type="entry name" value="BAR/IMD domain-like"/>
    <property type="match status" value="1"/>
</dbReference>
<dbReference type="SUPFAM" id="SSF64268">
    <property type="entry name" value="PX domain"/>
    <property type="match status" value="1"/>
</dbReference>
<dbReference type="PROSITE" id="PS50195">
    <property type="entry name" value="PX"/>
    <property type="match status" value="1"/>
</dbReference>
<sequence>MSGSSTPKSLPTSGQQSLHDIKHPLSCSPSAEDDAAGENGAVIIESPSPDLPNTEPSSLADKDLSLPNGTPADTSSPASSSSLLNRLQLDDDLDGETRDLFVTVDDPKKHVCTMETYITYRVSTKTTRTEFDLPEYSIRRRYQDFDWLRNKLEETQPTHFIPPLPEKFVVKGVVDRFSEEFVETRRKALDKFLKRIADHPVLSFNEHFNVFLTAKDLNSHKKQGITLLSKMGESVRYVTSGYKLRNRPVEFATITDYLDTFQLKLGTIDRIAQRIIKEEVEYLMELREYGPVYSTWSGLERELNEPLEGVSACVGNCSTALEELTEDMSEDFLPVIREYMLYSESMKTVLKKRDQVQAEYEAKAEAAALKREERSTVPTDVEKCQDKVECFNADLKADMDRWQNNKRQDFRQLLMGMADKNIQYYEKCLTAWESIIPLLQDKQEPK</sequence>
<evidence type="ECO:0000250" key="1">
    <source>
        <dbReference type="UniProtKB" id="O95219"/>
    </source>
</evidence>
<evidence type="ECO:0000250" key="2">
    <source>
        <dbReference type="UniProtKB" id="Q3UR97"/>
    </source>
</evidence>
<evidence type="ECO:0000250" key="3">
    <source>
        <dbReference type="UniProtKB" id="Q5VWJ9"/>
    </source>
</evidence>
<evidence type="ECO:0000250" key="4">
    <source>
        <dbReference type="UniProtKB" id="Q6P4T1"/>
    </source>
</evidence>
<evidence type="ECO:0000250" key="5">
    <source>
        <dbReference type="UniProtKB" id="Q96L94"/>
    </source>
</evidence>
<evidence type="ECO:0000255" key="6">
    <source>
        <dbReference type="PROSITE-ProRule" id="PRU00147"/>
    </source>
</evidence>
<evidence type="ECO:0000255" key="7">
    <source>
        <dbReference type="PROSITE-ProRule" id="PRU00361"/>
    </source>
</evidence>
<evidence type="ECO:0000256" key="8">
    <source>
        <dbReference type="SAM" id="MobiDB-lite"/>
    </source>
</evidence>
<evidence type="ECO:0000305" key="9"/>